<keyword id="KW-0687">Ribonucleoprotein</keyword>
<keyword id="KW-0689">Ribosomal protein</keyword>
<comment type="similarity">
    <text evidence="1">Belongs to the universal ribosomal protein uS2 family.</text>
</comment>
<name>RS2_BURP1</name>
<evidence type="ECO:0000255" key="1">
    <source>
        <dbReference type="HAMAP-Rule" id="MF_00291"/>
    </source>
</evidence>
<evidence type="ECO:0000305" key="2"/>
<sequence>MAITMRQMLEAGVHFGHQTRFWNPKMAPFIFGHRNKIHIINLEKTLPMYNDALKYVRQLAANRGTILFVGTKRQSRDTIAQEALRAGMPYVNARWLGGMLTNFKTLKVSIKRLKDMEAAVEAGELEKMSKKEALLFEREIAKLQKSIGGVKDMGGIPDAIFVVDVGYHKIAVTEANKLGVPVIAVVDTNHSPEGVDYVIPGNDDSSKAVALYAQGVADAILEGRANAVNEVVQAVRGDDEYVEENA</sequence>
<protein>
    <recommendedName>
        <fullName evidence="1">Small ribosomal subunit protein uS2</fullName>
    </recommendedName>
    <alternativeName>
        <fullName evidence="2">30S ribosomal protein S2</fullName>
    </alternativeName>
</protein>
<accession>Q3JR28</accession>
<dbReference type="EMBL" id="CP000124">
    <property type="protein sequence ID" value="ABA47628.1"/>
    <property type="molecule type" value="Genomic_DNA"/>
</dbReference>
<dbReference type="RefSeq" id="WP_004193246.1">
    <property type="nucleotide sequence ID" value="NC_007434.1"/>
</dbReference>
<dbReference type="SMR" id="Q3JR28"/>
<dbReference type="EnsemblBacteria" id="ABA47628">
    <property type="protein sequence ID" value="ABA47628"/>
    <property type="gene ID" value="BURPS1710b_2583"/>
</dbReference>
<dbReference type="GeneID" id="93060700"/>
<dbReference type="KEGG" id="bpm:BURPS1710b_2583"/>
<dbReference type="HOGENOM" id="CLU_040318_1_2_4"/>
<dbReference type="Proteomes" id="UP000002700">
    <property type="component" value="Chromosome I"/>
</dbReference>
<dbReference type="GO" id="GO:0022627">
    <property type="term" value="C:cytosolic small ribosomal subunit"/>
    <property type="evidence" value="ECO:0007669"/>
    <property type="project" value="TreeGrafter"/>
</dbReference>
<dbReference type="GO" id="GO:0003735">
    <property type="term" value="F:structural constituent of ribosome"/>
    <property type="evidence" value="ECO:0007669"/>
    <property type="project" value="InterPro"/>
</dbReference>
<dbReference type="GO" id="GO:0006412">
    <property type="term" value="P:translation"/>
    <property type="evidence" value="ECO:0007669"/>
    <property type="project" value="UniProtKB-UniRule"/>
</dbReference>
<dbReference type="CDD" id="cd01425">
    <property type="entry name" value="RPS2"/>
    <property type="match status" value="1"/>
</dbReference>
<dbReference type="FunFam" id="1.10.287.610:FF:000001">
    <property type="entry name" value="30S ribosomal protein S2"/>
    <property type="match status" value="1"/>
</dbReference>
<dbReference type="Gene3D" id="3.40.50.10490">
    <property type="entry name" value="Glucose-6-phosphate isomerase like protein, domain 1"/>
    <property type="match status" value="1"/>
</dbReference>
<dbReference type="Gene3D" id="1.10.287.610">
    <property type="entry name" value="Helix hairpin bin"/>
    <property type="match status" value="1"/>
</dbReference>
<dbReference type="HAMAP" id="MF_00291_B">
    <property type="entry name" value="Ribosomal_uS2_B"/>
    <property type="match status" value="1"/>
</dbReference>
<dbReference type="InterPro" id="IPR001865">
    <property type="entry name" value="Ribosomal_uS2"/>
</dbReference>
<dbReference type="InterPro" id="IPR005706">
    <property type="entry name" value="Ribosomal_uS2_bac/mit/plastid"/>
</dbReference>
<dbReference type="InterPro" id="IPR018130">
    <property type="entry name" value="Ribosomal_uS2_CS"/>
</dbReference>
<dbReference type="InterPro" id="IPR023591">
    <property type="entry name" value="Ribosomal_uS2_flav_dom_sf"/>
</dbReference>
<dbReference type="NCBIfam" id="TIGR01011">
    <property type="entry name" value="rpsB_bact"/>
    <property type="match status" value="1"/>
</dbReference>
<dbReference type="PANTHER" id="PTHR12534">
    <property type="entry name" value="30S RIBOSOMAL PROTEIN S2 PROKARYOTIC AND ORGANELLAR"/>
    <property type="match status" value="1"/>
</dbReference>
<dbReference type="PANTHER" id="PTHR12534:SF0">
    <property type="entry name" value="SMALL RIBOSOMAL SUBUNIT PROTEIN US2M"/>
    <property type="match status" value="1"/>
</dbReference>
<dbReference type="Pfam" id="PF00318">
    <property type="entry name" value="Ribosomal_S2"/>
    <property type="match status" value="1"/>
</dbReference>
<dbReference type="PRINTS" id="PR00395">
    <property type="entry name" value="RIBOSOMALS2"/>
</dbReference>
<dbReference type="SUPFAM" id="SSF52313">
    <property type="entry name" value="Ribosomal protein S2"/>
    <property type="match status" value="1"/>
</dbReference>
<dbReference type="PROSITE" id="PS00962">
    <property type="entry name" value="RIBOSOMAL_S2_1"/>
    <property type="match status" value="1"/>
</dbReference>
<gene>
    <name evidence="1" type="primary">rpsB</name>
    <name type="ordered locus">BURPS1710b_2583</name>
</gene>
<reference key="1">
    <citation type="journal article" date="2010" name="Genome Biol. Evol.">
        <title>Continuing evolution of Burkholderia mallei through genome reduction and large-scale rearrangements.</title>
        <authorList>
            <person name="Losada L."/>
            <person name="Ronning C.M."/>
            <person name="DeShazer D."/>
            <person name="Woods D."/>
            <person name="Fedorova N."/>
            <person name="Kim H.S."/>
            <person name="Shabalina S.A."/>
            <person name="Pearson T.R."/>
            <person name="Brinkac L."/>
            <person name="Tan P."/>
            <person name="Nandi T."/>
            <person name="Crabtree J."/>
            <person name="Badger J."/>
            <person name="Beckstrom-Sternberg S."/>
            <person name="Saqib M."/>
            <person name="Schutzer S.E."/>
            <person name="Keim P."/>
            <person name="Nierman W.C."/>
        </authorList>
    </citation>
    <scope>NUCLEOTIDE SEQUENCE [LARGE SCALE GENOMIC DNA]</scope>
    <source>
        <strain>1710b</strain>
    </source>
</reference>
<organism>
    <name type="scientific">Burkholderia pseudomallei (strain 1710b)</name>
    <dbReference type="NCBI Taxonomy" id="320372"/>
    <lineage>
        <taxon>Bacteria</taxon>
        <taxon>Pseudomonadati</taxon>
        <taxon>Pseudomonadota</taxon>
        <taxon>Betaproteobacteria</taxon>
        <taxon>Burkholderiales</taxon>
        <taxon>Burkholderiaceae</taxon>
        <taxon>Burkholderia</taxon>
        <taxon>pseudomallei group</taxon>
    </lineage>
</organism>
<proteinExistence type="inferred from homology"/>
<feature type="chain" id="PRO_1000003913" description="Small ribosomal subunit protein uS2">
    <location>
        <begin position="1"/>
        <end position="246"/>
    </location>
</feature>